<proteinExistence type="inferred from homology"/>
<keyword id="KW-1185">Reference proteome</keyword>
<protein>
    <recommendedName>
        <fullName>Uncharacterized protein HI_1340</fullName>
    </recommendedName>
</protein>
<dbReference type="EMBL" id="L42023">
    <property type="protein sequence ID" value="AAC22986.1"/>
    <property type="molecule type" value="Genomic_DNA"/>
</dbReference>
<dbReference type="PIR" id="C64026">
    <property type="entry name" value="C64026"/>
</dbReference>
<dbReference type="RefSeq" id="NP_439491.1">
    <property type="nucleotide sequence ID" value="NC_000907.1"/>
</dbReference>
<dbReference type="SMR" id="P44165"/>
<dbReference type="STRING" id="71421.HI_1340"/>
<dbReference type="EnsemblBacteria" id="AAC22986">
    <property type="protein sequence ID" value="AAC22986"/>
    <property type="gene ID" value="HI_1340"/>
</dbReference>
<dbReference type="KEGG" id="hin:HI_1340"/>
<dbReference type="PATRIC" id="fig|71421.8.peg.1392"/>
<dbReference type="eggNOG" id="COG0780">
    <property type="taxonomic scope" value="Bacteria"/>
</dbReference>
<dbReference type="eggNOG" id="COG1538">
    <property type="taxonomic scope" value="Bacteria"/>
</dbReference>
<dbReference type="eggNOG" id="COG2904">
    <property type="taxonomic scope" value="Bacteria"/>
</dbReference>
<dbReference type="HOGENOM" id="CLU_050512_0_0_6"/>
<dbReference type="OrthoDB" id="9770517at2"/>
<dbReference type="PhylomeDB" id="P44165"/>
<dbReference type="BioCyc" id="HINF71421:G1GJ1-1365-MONOMER"/>
<dbReference type="Proteomes" id="UP000000579">
    <property type="component" value="Chromosome"/>
</dbReference>
<dbReference type="GO" id="GO:0016020">
    <property type="term" value="C:membrane"/>
    <property type="evidence" value="ECO:0000318"/>
    <property type="project" value="GO_Central"/>
</dbReference>
<dbReference type="GO" id="GO:0015562">
    <property type="term" value="F:efflux transmembrane transporter activity"/>
    <property type="evidence" value="ECO:0007669"/>
    <property type="project" value="InterPro"/>
</dbReference>
<dbReference type="GO" id="GO:0022857">
    <property type="term" value="F:transmembrane transporter activity"/>
    <property type="evidence" value="ECO:0000318"/>
    <property type="project" value="GO_Central"/>
</dbReference>
<dbReference type="GO" id="GO:0055085">
    <property type="term" value="P:transmembrane transport"/>
    <property type="evidence" value="ECO:0000318"/>
    <property type="project" value="GO_Central"/>
</dbReference>
<dbReference type="Gene3D" id="3.30.1130.10">
    <property type="match status" value="1"/>
</dbReference>
<dbReference type="Gene3D" id="1.20.1600.10">
    <property type="entry name" value="Outer membrane efflux proteins (OEP)"/>
    <property type="match status" value="1"/>
</dbReference>
<dbReference type="InterPro" id="IPR043133">
    <property type="entry name" value="GTP-CH-I_C/QueF"/>
</dbReference>
<dbReference type="InterPro" id="IPR050737">
    <property type="entry name" value="OMF"/>
</dbReference>
<dbReference type="InterPro" id="IPR003423">
    <property type="entry name" value="OMP_efflux"/>
</dbReference>
<dbReference type="InterPro" id="IPR029139">
    <property type="entry name" value="QueF_N"/>
</dbReference>
<dbReference type="PANTHER" id="PTHR30203:SF32">
    <property type="entry name" value="CATION EFFLUX SYSTEM PROTEIN CUSC"/>
    <property type="match status" value="1"/>
</dbReference>
<dbReference type="PANTHER" id="PTHR30203">
    <property type="entry name" value="OUTER MEMBRANE CATION EFFLUX PROTEIN"/>
    <property type="match status" value="1"/>
</dbReference>
<dbReference type="Pfam" id="PF02321">
    <property type="entry name" value="OEP"/>
    <property type="match status" value="1"/>
</dbReference>
<dbReference type="Pfam" id="PF14819">
    <property type="entry name" value="QueF_N"/>
    <property type="match status" value="1"/>
</dbReference>
<dbReference type="SUPFAM" id="SSF56954">
    <property type="entry name" value="Outer membrane efflux proteins (OEP)"/>
    <property type="match status" value="1"/>
</dbReference>
<organism>
    <name type="scientific">Haemophilus influenzae (strain ATCC 51907 / DSM 11121 / KW20 / Rd)</name>
    <dbReference type="NCBI Taxonomy" id="71421"/>
    <lineage>
        <taxon>Bacteria</taxon>
        <taxon>Pseudomonadati</taxon>
        <taxon>Pseudomonadota</taxon>
        <taxon>Gammaproteobacteria</taxon>
        <taxon>Pasteurellales</taxon>
        <taxon>Pasteurellaceae</taxon>
        <taxon>Haemophilus</taxon>
    </lineage>
</organism>
<sequence>MNYQDNSLKSLKLGQKTEYASQYDRTLLQPVPRALNRDGLGITQNQPFTIGADIWTAYEISWLNEKGLPQVAIADIYLDYQSQNLIESKSFKLYLNSFNQSKFTDFNAVQQTMQRDLSECAQGDVKVRLNPVAVYDAQKINHLQGDCIDEQDIEITSYEFNANWLKDCVSNEIVEEKLVSHLLKSNCLITNQPDWGTDQAQQAILTARNNKLNFETQRKTAEQTLRNLLNLKPNEALNITFPHIMNVKTAGVNLNVPVSVIANRPDVKAAQFRLSSAFKNAKATQKSWFPEVNLGASLSSTASTVGTALHNPVAAGTVGISLPFLNWNTVKWNVKISEADYETARLNYEQRITTALNNVDTNYFAFTQAQSTLSNLQQTHSYNQRITQYYRNRYNAGVSELREWLVAANTEKSSQLAILNAKYQVLQSENAVYSSMAGYYL</sequence>
<feature type="chain" id="PRO_0000078030" description="Uncharacterized protein HI_1340">
    <location>
        <begin position="1"/>
        <end position="441"/>
    </location>
</feature>
<accession>P44165</accession>
<comment type="similarity">
    <text evidence="1">Belongs to the outer membrane factor (OMF) (TC 1.B.17) family.</text>
</comment>
<name>Y1340_HAEIN</name>
<evidence type="ECO:0000305" key="1"/>
<reference key="1">
    <citation type="journal article" date="1995" name="Science">
        <title>Whole-genome random sequencing and assembly of Haemophilus influenzae Rd.</title>
        <authorList>
            <person name="Fleischmann R.D."/>
            <person name="Adams M.D."/>
            <person name="White O."/>
            <person name="Clayton R.A."/>
            <person name="Kirkness E.F."/>
            <person name="Kerlavage A.R."/>
            <person name="Bult C.J."/>
            <person name="Tomb J.-F."/>
            <person name="Dougherty B.A."/>
            <person name="Merrick J.M."/>
            <person name="McKenney K."/>
            <person name="Sutton G.G."/>
            <person name="FitzHugh W."/>
            <person name="Fields C.A."/>
            <person name="Gocayne J.D."/>
            <person name="Scott J.D."/>
            <person name="Shirley R."/>
            <person name="Liu L.-I."/>
            <person name="Glodek A."/>
            <person name="Kelley J.M."/>
            <person name="Weidman J.F."/>
            <person name="Phillips C.A."/>
            <person name="Spriggs T."/>
            <person name="Hedblom E."/>
            <person name="Cotton M.D."/>
            <person name="Utterback T.R."/>
            <person name="Hanna M.C."/>
            <person name="Nguyen D.T."/>
            <person name="Saudek D.M."/>
            <person name="Brandon R.C."/>
            <person name="Fine L.D."/>
            <person name="Fritchman J.L."/>
            <person name="Fuhrmann J.L."/>
            <person name="Geoghagen N.S.M."/>
            <person name="Gnehm C.L."/>
            <person name="McDonald L.A."/>
            <person name="Small K.V."/>
            <person name="Fraser C.M."/>
            <person name="Smith H.O."/>
            <person name="Venter J.C."/>
        </authorList>
    </citation>
    <scope>NUCLEOTIDE SEQUENCE [LARGE SCALE GENOMIC DNA]</scope>
    <source>
        <strain>ATCC 51907 / DSM 11121 / KW20 / Rd</strain>
    </source>
</reference>
<gene>
    <name type="ordered locus">HI_1340</name>
</gene>